<gene>
    <name evidence="4" type="primary">zorB</name>
    <name evidence="7" type="ordered locus">EcolC_3889</name>
</gene>
<sequence>MDKIIGKQLPKKDQDNEHWVSMSDLMAGLMMVFMFISIAYMHYVRIEKEKIKEVAVAYENAQLQIYNALDIEFAKDLQDWDAEIDKQTLEVRFKSPDVLFGLGSTELKPKFKLILDDFFPRYLKVLDNYQEHITEVRIEGHTSTDWTGTTNPDIAYFNNMALSQGRTRAVLQYVYDIKNIATHQQWVKSKFAAVGYSSAHPILDKTGKEDPNRSRRVTFKVVTNAELQIRKIIQE</sequence>
<organism>
    <name type="scientific">Escherichia coli (strain ATCC 8739 / DSM 1576 / NBRC 3972 / NCIMB 8545 / WDCM 00012 / Crooks)</name>
    <dbReference type="NCBI Taxonomy" id="481805"/>
    <lineage>
        <taxon>Bacteria</taxon>
        <taxon>Pseudomonadati</taxon>
        <taxon>Pseudomonadota</taxon>
        <taxon>Gammaproteobacteria</taxon>
        <taxon>Enterobacterales</taxon>
        <taxon>Enterobacteriaceae</taxon>
        <taxon>Escherichia</taxon>
    </lineage>
</organism>
<name>ZORB_ECOLC</name>
<protein>
    <recommendedName>
        <fullName evidence="4">Zorya protein ZorB</fullName>
    </recommendedName>
</protein>
<dbReference type="EMBL" id="CP000946">
    <property type="protein sequence ID" value="ACA79491.1"/>
    <property type="molecule type" value="Genomic_DNA"/>
</dbReference>
<dbReference type="RefSeq" id="WP_000357805.1">
    <property type="nucleotide sequence ID" value="NC_010468.1"/>
</dbReference>
<dbReference type="SMR" id="P0DW02"/>
<dbReference type="KEGG" id="ecl:EcolC_3889"/>
<dbReference type="GO" id="GO:0005886">
    <property type="term" value="C:plasma membrane"/>
    <property type="evidence" value="ECO:0007669"/>
    <property type="project" value="UniProtKB-SubCell"/>
</dbReference>
<dbReference type="GO" id="GO:0051607">
    <property type="term" value="P:defense response to virus"/>
    <property type="evidence" value="ECO:0007669"/>
    <property type="project" value="UniProtKB-KW"/>
</dbReference>
<dbReference type="CDD" id="cd07185">
    <property type="entry name" value="OmpA_C-like"/>
    <property type="match status" value="1"/>
</dbReference>
<dbReference type="Gene3D" id="3.30.1330.60">
    <property type="entry name" value="OmpA-like domain"/>
    <property type="match status" value="1"/>
</dbReference>
<dbReference type="InterPro" id="IPR050330">
    <property type="entry name" value="Bact_OuterMem_StrucFunc"/>
</dbReference>
<dbReference type="InterPro" id="IPR006665">
    <property type="entry name" value="OmpA-like"/>
</dbReference>
<dbReference type="InterPro" id="IPR036737">
    <property type="entry name" value="OmpA-like_sf"/>
</dbReference>
<dbReference type="InterPro" id="IPR049653">
    <property type="entry name" value="ZorB-like_t2"/>
</dbReference>
<dbReference type="NCBIfam" id="NF041787">
    <property type="entry name" value="anti-phage_ZorB2"/>
    <property type="match status" value="1"/>
</dbReference>
<dbReference type="PANTHER" id="PTHR30329:SF21">
    <property type="entry name" value="LIPOPROTEIN YIAD-RELATED"/>
    <property type="match status" value="1"/>
</dbReference>
<dbReference type="PANTHER" id="PTHR30329">
    <property type="entry name" value="STATOR ELEMENT OF FLAGELLAR MOTOR COMPLEX"/>
    <property type="match status" value="1"/>
</dbReference>
<dbReference type="Pfam" id="PF00691">
    <property type="entry name" value="OmpA"/>
    <property type="match status" value="1"/>
</dbReference>
<dbReference type="SUPFAM" id="SSF103088">
    <property type="entry name" value="OmpA-like"/>
    <property type="match status" value="1"/>
</dbReference>
<dbReference type="PROSITE" id="PS51123">
    <property type="entry name" value="OMPA_2"/>
    <property type="match status" value="1"/>
</dbReference>
<keyword id="KW-0051">Antiviral defense</keyword>
<keyword id="KW-0997">Cell inner membrane</keyword>
<keyword id="KW-1003">Cell membrane</keyword>
<keyword id="KW-0472">Membrane</keyword>
<keyword id="KW-0812">Transmembrane</keyword>
<keyword id="KW-1133">Transmembrane helix</keyword>
<comment type="function">
    <text evidence="3 6">Component of antiviral defense system Zorya type II, composed of ZorA, ZorB and ZorE. Expression of Zorya type II in E.coli (strain MG1655) confers resistance to phages SECphi7 and T7. While most T7 infected Zorya-containing cells undergo abortive infection, a minority produce viable phage progeny. These eventually accumulate to a high multiplicity of infection, leading to culture collapse by 170 minutes after initial infection (PubMed:29371424). ZorA and ZorB probably assemble in the cell inner membrane and exert their effect there (Probable).</text>
</comment>
<comment type="subcellular location">
    <subcellularLocation>
        <location evidence="6">Cell inner membrane</location>
        <topology evidence="1">Single-pass membrane protein</topology>
    </subcellularLocation>
</comment>
<comment type="similarity">
    <text evidence="5">Belongs to the MotB family.</text>
</comment>
<reference evidence="7" key="1">
    <citation type="submission" date="2008-02" db="EMBL/GenBank/DDBJ databases">
        <title>Complete sequence of Escherichia coli C str. ATCC 8739.</title>
        <authorList>
            <person name="Copeland A."/>
            <person name="Lucas S."/>
            <person name="Lapidus A."/>
            <person name="Glavina del Rio T."/>
            <person name="Dalin E."/>
            <person name="Tice H."/>
            <person name="Bruce D."/>
            <person name="Goodwin L."/>
            <person name="Pitluck S."/>
            <person name="Kiss H."/>
            <person name="Brettin T."/>
            <person name="Detter J.C."/>
            <person name="Han C."/>
            <person name="Kuske C.R."/>
            <person name="Schmutz J."/>
            <person name="Larimer F."/>
            <person name="Land M."/>
            <person name="Hauser L."/>
            <person name="Kyrpides N."/>
            <person name="Mikhailova N."/>
            <person name="Ingram L."/>
            <person name="Richardson P."/>
        </authorList>
    </citation>
    <scope>NUCLEOTIDE SEQUENCE [LARGE SCALE GENOMIC DNA]</scope>
    <source>
        <strain>ATCC 8739 / DSM 1576 / NBRC 3972 / NCIMB 8545 / WDCM 00012 / Crooks</strain>
    </source>
</reference>
<reference key="2">
    <citation type="journal article" date="2018" name="Science">
        <title>Systematic discovery of antiphage defense systems in the microbial pangenome.</title>
        <authorList>
            <person name="Doron S."/>
            <person name="Melamed S."/>
            <person name="Ofir G."/>
            <person name="Leavitt A."/>
            <person name="Lopatina A."/>
            <person name="Keren M."/>
            <person name="Amitai G."/>
            <person name="Sorek R."/>
        </authorList>
    </citation>
    <scope>FUNCTION</scope>
    <scope>SUBCELLULAR LOCATION</scope>
    <source>
        <strain>ATCC 8739 / DSM 1576 / NBRC 3972 / NCIMB 8545 / WDCM 00012 / Crooks</strain>
    </source>
</reference>
<proteinExistence type="inferred from homology"/>
<evidence type="ECO:0000255" key="1"/>
<evidence type="ECO:0000255" key="2">
    <source>
        <dbReference type="PROSITE-ProRule" id="PRU00473"/>
    </source>
</evidence>
<evidence type="ECO:0000269" key="3">
    <source>
    </source>
</evidence>
<evidence type="ECO:0000303" key="4">
    <source>
    </source>
</evidence>
<evidence type="ECO:0000305" key="5"/>
<evidence type="ECO:0000305" key="6">
    <source>
    </source>
</evidence>
<evidence type="ECO:0000312" key="7">
    <source>
        <dbReference type="EMBL" id="ACA79491.1"/>
    </source>
</evidence>
<feature type="chain" id="PRO_0000456341" description="Zorya protein ZorB">
    <location>
        <begin position="1"/>
        <end position="235"/>
    </location>
</feature>
<feature type="transmembrane region" description="Helical" evidence="1">
    <location>
        <begin position="25"/>
        <end position="44"/>
    </location>
</feature>
<feature type="domain" description="OmpA-like" evidence="2">
    <location>
        <begin position="87"/>
        <end position="225"/>
    </location>
</feature>
<accession>P0DW02</accession>